<reference key="1">
    <citation type="journal article" date="2000" name="DNA Res.">
        <title>Structural analysis of Arabidopsis thaliana chromosome 3. I. Sequence features of the regions of 4,504,864 bp covered by sixty P1 and TAC clones.</title>
        <authorList>
            <person name="Sato S."/>
            <person name="Nakamura Y."/>
            <person name="Kaneko T."/>
            <person name="Katoh T."/>
            <person name="Asamizu E."/>
            <person name="Tabata S."/>
        </authorList>
    </citation>
    <scope>NUCLEOTIDE SEQUENCE [LARGE SCALE GENOMIC DNA]</scope>
    <source>
        <strain>cv. Columbia</strain>
    </source>
</reference>
<reference key="2">
    <citation type="journal article" date="2017" name="Plant J.">
        <title>Araport11: a complete reannotation of the Arabidopsis thaliana reference genome.</title>
        <authorList>
            <person name="Cheng C.Y."/>
            <person name="Krishnakumar V."/>
            <person name="Chan A.P."/>
            <person name="Thibaud-Nissen F."/>
            <person name="Schobel S."/>
            <person name="Town C.D."/>
        </authorList>
    </citation>
    <scope>GENOME REANNOTATION</scope>
    <source>
        <strain>cv. Columbia</strain>
    </source>
</reference>
<reference key="3">
    <citation type="journal article" date="2005" name="Plant Physiol.">
        <title>Phylogenomic analysis of the receptor-like proteins of rice and Arabidopsis.</title>
        <authorList>
            <person name="Fritz-Laylin L.K."/>
            <person name="Krishnamurthy N."/>
            <person name="Toer M."/>
            <person name="Sjoelander K.V."/>
            <person name="Jones J.D."/>
        </authorList>
    </citation>
    <scope>GENE FAMILY</scope>
</reference>
<reference key="4">
    <citation type="journal article" date="2008" name="Plant Physiol.">
        <title>A genome-wide functional investigation into the roles of receptor-like proteins in Arabidopsis.</title>
        <authorList>
            <person name="Wang G."/>
            <person name="Ellendorff U."/>
            <person name="Kemp B."/>
            <person name="Mansfield J.W."/>
            <person name="Forsyth A."/>
            <person name="Mitchell K."/>
            <person name="Bastas K."/>
            <person name="Liu C.-M."/>
            <person name="Woods-Toer A."/>
            <person name="Zipfel C."/>
            <person name="de Wit P.J.G.M."/>
            <person name="Jones J.D.G."/>
            <person name="Toer M."/>
            <person name="Thomma B.P.H.J."/>
        </authorList>
    </citation>
    <scope>GENE FAMILY</scope>
    <scope>NOMENCLATURE</scope>
    <source>
        <strain>cv. Columbia</strain>
    </source>
</reference>
<protein>
    <recommendedName>
        <fullName evidence="3">Receptor-like protein 39</fullName>
        <shortName evidence="3">AtRLP39</shortName>
    </recommendedName>
</protein>
<proteinExistence type="inferred from homology"/>
<accession>F4J7T6</accession>
<accession>Q9LRX1</accession>
<comment type="subcellular location">
    <subcellularLocation>
        <location evidence="4">Cell membrane</location>
        <topology evidence="4">Single-pass type I membrane protein</topology>
    </subcellularLocation>
</comment>
<comment type="similarity">
    <text evidence="4">Belongs to the RLP family.</text>
</comment>
<comment type="sequence caution" evidence="4">
    <conflict type="erroneous gene model prediction">
        <sequence resource="EMBL-CDS" id="BAB02900"/>
    </conflict>
</comment>
<sequence>MSELLFRLNFLLLLLLSCVSLASSFFSFNDPVVGLGACGPHQIQAFTQFKNEFDTHACNHSDSLNGVWCDNSTGAVMKLRLRACLSGTLKSNSSLFQFHQLRHLYLSYNNFTPSSIPSEFGMLNKLEVLFMSTGGFLGQVPSSFSNLSMLSALLLHHNELTGSLSFVRNLRKLTILDVSHNHFSGTLNPNSSLFELHNLAYLDLGSNNFTSSSLPYEFGNLNKLELLDVSSNSFFGQVPPTISNLTQLTELYLPLNDFTGSLPLVQNLTKLSILHLSDNHFSGTIPSSLFTMPFLSYLDLGGNNLSGSIEVPNSSLSSRLENLNLGENHFEGKIIEPISKLINLKELHLSFLNTSYPINLKLFSSLKYLLLLDLSGGWISQASLSLDSYIPSTLEALLLKHCNISVFPNILKTLPNLEFIALSTNKISGKIPEWLWSLPRLSSVFIEENLFTGFEGSSEILVNSSVRILNLLSNNLEGALPHLPLSVNYFSARNNRYGGDIPLSICSRRSLVFLDLSYNNFTGPIPPCPSNFLILNLRKNNLEGSIPDTYYADAPLRSLDVGYNRLTGKLPRSLLNCSALQFLSVDHNGIKDTFPFSLKALPKLQVLILHSNNFYGPLSPPNQGSLGFPELRILEIAGNKFTGSLPPDFFENWKASSLTMNEDQGLYMVYNKVVYGTYYFTSLEAIDLQYKGLSMEQNRVLSSSATIDFSGNRLEGEIPESIGLLKALIALNLSNNAFTGHIPLSLANLKKIESLDLSSNQLSGTIPNGIGTLSFLAYMNVSHNQLNGEIPQGTQITGQPKSSFEGNAGLCGLPLQESCFGTNAPPAQHPKEEEEEEEEEEQVLNWKGVGIGYGVGVLLGLAIAQLIASYKPEWLVFLFQSRNH</sequence>
<dbReference type="EMBL" id="AB028609">
    <property type="protein sequence ID" value="BAB02900.1"/>
    <property type="status" value="ALT_SEQ"/>
    <property type="molecule type" value="Genomic_DNA"/>
</dbReference>
<dbReference type="EMBL" id="CP002686">
    <property type="protein sequence ID" value="AEE76960.1"/>
    <property type="molecule type" value="Genomic_DNA"/>
</dbReference>
<dbReference type="RefSeq" id="NP_189134.1">
    <property type="nucleotide sequence ID" value="NM_113402.1"/>
</dbReference>
<dbReference type="SMR" id="F4J7T6"/>
<dbReference type="STRING" id="3702.F4J7T6"/>
<dbReference type="GlyCosmos" id="F4J7T6">
    <property type="glycosylation" value="17 sites, No reported glycans"/>
</dbReference>
<dbReference type="GlyGen" id="F4J7T6">
    <property type="glycosylation" value="17 sites"/>
</dbReference>
<dbReference type="PaxDb" id="3702-AT3G24900.1"/>
<dbReference type="ProteomicsDB" id="228113"/>
<dbReference type="EnsemblPlants" id="AT3G24900.1">
    <property type="protein sequence ID" value="AT3G24900.1"/>
    <property type="gene ID" value="AT3G24900"/>
</dbReference>
<dbReference type="GeneID" id="822088"/>
<dbReference type="Gramene" id="AT3G24900.1">
    <property type="protein sequence ID" value="AT3G24900.1"/>
    <property type="gene ID" value="AT3G24900"/>
</dbReference>
<dbReference type="KEGG" id="ath:AT3G24900"/>
<dbReference type="Araport" id="AT3G24900"/>
<dbReference type="TAIR" id="AT3G24900">
    <property type="gene designation" value="RLP39"/>
</dbReference>
<dbReference type="HOGENOM" id="CLU_000288_18_3_1"/>
<dbReference type="InParanoid" id="F4J7T6"/>
<dbReference type="OMA" id="HVMASYK"/>
<dbReference type="PRO" id="PR:F4J7T6"/>
<dbReference type="Proteomes" id="UP000006548">
    <property type="component" value="Chromosome 3"/>
</dbReference>
<dbReference type="ExpressionAtlas" id="F4J7T6">
    <property type="expression patterns" value="baseline and differential"/>
</dbReference>
<dbReference type="GO" id="GO:0005886">
    <property type="term" value="C:plasma membrane"/>
    <property type="evidence" value="ECO:0007669"/>
    <property type="project" value="UniProtKB-SubCell"/>
</dbReference>
<dbReference type="FunFam" id="3.80.10.10:FF:000924">
    <property type="entry name" value="Receptor like protein 39"/>
    <property type="match status" value="1"/>
</dbReference>
<dbReference type="FunFam" id="3.80.10.10:FF:001696">
    <property type="entry name" value="Receptor like protein 39"/>
    <property type="match status" value="1"/>
</dbReference>
<dbReference type="FunFam" id="3.80.10.10:FF:001628">
    <property type="entry name" value="Receptor like protein 41"/>
    <property type="match status" value="1"/>
</dbReference>
<dbReference type="FunFam" id="3.80.10.10:FF:000213">
    <property type="entry name" value="Tyrosine-sulfated glycopeptide receptor 1"/>
    <property type="match status" value="1"/>
</dbReference>
<dbReference type="Gene3D" id="3.80.10.10">
    <property type="entry name" value="Ribonuclease Inhibitor"/>
    <property type="match status" value="5"/>
</dbReference>
<dbReference type="InterPro" id="IPR001611">
    <property type="entry name" value="Leu-rich_rpt"/>
</dbReference>
<dbReference type="InterPro" id="IPR003591">
    <property type="entry name" value="Leu-rich_rpt_typical-subtyp"/>
</dbReference>
<dbReference type="InterPro" id="IPR032675">
    <property type="entry name" value="LRR_dom_sf"/>
</dbReference>
<dbReference type="InterPro" id="IPR046956">
    <property type="entry name" value="RLP23-like"/>
</dbReference>
<dbReference type="PANTHER" id="PTHR48061">
    <property type="entry name" value="LEUCINE-RICH REPEAT RECEPTOR PROTEIN KINASE EMS1-LIKE-RELATED"/>
    <property type="match status" value="1"/>
</dbReference>
<dbReference type="PANTHER" id="PTHR48061:SF2">
    <property type="entry name" value="RECEPTOR LIKE PROTEIN 30-LIKE"/>
    <property type="match status" value="1"/>
</dbReference>
<dbReference type="Pfam" id="PF00560">
    <property type="entry name" value="LRR_1"/>
    <property type="match status" value="11"/>
</dbReference>
<dbReference type="Pfam" id="PF13516">
    <property type="entry name" value="LRR_6"/>
    <property type="match status" value="1"/>
</dbReference>
<dbReference type="SMART" id="SM00369">
    <property type="entry name" value="LRR_TYP"/>
    <property type="match status" value="9"/>
</dbReference>
<dbReference type="SUPFAM" id="SSF52058">
    <property type="entry name" value="L domain-like"/>
    <property type="match status" value="3"/>
</dbReference>
<gene>
    <name evidence="3" type="primary">RLP39</name>
    <name evidence="5" type="ordered locus">At3g24900</name>
    <name evidence="6" type="ORF">K7P8.19</name>
</gene>
<feature type="signal peptide" evidence="1">
    <location>
        <begin position="1"/>
        <end position="24"/>
    </location>
</feature>
<feature type="chain" id="PRO_5003315430" description="Receptor-like protein 39">
    <location>
        <begin position="25"/>
        <end position="884"/>
    </location>
</feature>
<feature type="topological domain" description="Extracellular" evidence="1">
    <location>
        <begin position="25"/>
        <end position="847"/>
    </location>
</feature>
<feature type="transmembrane region" description="Helical" evidence="1">
    <location>
        <begin position="848"/>
        <end position="868"/>
    </location>
</feature>
<feature type="topological domain" description="Cytoplasmic" evidence="1">
    <location>
        <begin position="869"/>
        <end position="884"/>
    </location>
</feature>
<feature type="repeat" description="LRR 1" evidence="1">
    <location>
        <begin position="98"/>
        <end position="122"/>
    </location>
</feature>
<feature type="repeat" description="LRR 2" evidence="1">
    <location>
        <begin position="124"/>
        <end position="146"/>
    </location>
</feature>
<feature type="repeat" description="LRR 3" evidence="1">
    <location>
        <begin position="147"/>
        <end position="170"/>
    </location>
</feature>
<feature type="repeat" description="LRR 4" evidence="1">
    <location>
        <begin position="171"/>
        <end position="196"/>
    </location>
</feature>
<feature type="repeat" description="LRR 5" evidence="1">
    <location>
        <begin position="197"/>
        <end position="223"/>
    </location>
</feature>
<feature type="repeat" description="LRR 6" evidence="1">
    <location>
        <begin position="225"/>
        <end position="245"/>
    </location>
</feature>
<feature type="repeat" description="LRR 7" evidence="1">
    <location>
        <begin position="246"/>
        <end position="268"/>
    </location>
</feature>
<feature type="repeat" description="LRR 8" evidence="1">
    <location>
        <begin position="269"/>
        <end position="292"/>
    </location>
</feature>
<feature type="repeat" description="LRR 9" evidence="1">
    <location>
        <begin position="294"/>
        <end position="318"/>
    </location>
</feature>
<feature type="repeat" description="LRR 10" evidence="1">
    <location>
        <begin position="320"/>
        <end position="344"/>
    </location>
</feature>
<feature type="repeat" description="LRR 11; degenerate" evidence="4">
    <location>
        <begin position="345"/>
        <end position="365"/>
    </location>
</feature>
<feature type="repeat" description="LRR 12" evidence="1">
    <location>
        <begin position="366"/>
        <end position="391"/>
    </location>
</feature>
<feature type="repeat" description="LRR 13" evidence="1">
    <location>
        <begin position="392"/>
        <end position="413"/>
    </location>
</feature>
<feature type="repeat" description="LRR 14" evidence="1">
    <location>
        <begin position="414"/>
        <end position="438"/>
    </location>
</feature>
<feature type="repeat" description="LRR 15" evidence="1">
    <location>
        <begin position="440"/>
        <end position="463"/>
    </location>
</feature>
<feature type="repeat" description="LRR 16" evidence="1">
    <location>
        <begin position="464"/>
        <end position="487"/>
    </location>
</feature>
<feature type="repeat" description="LRR 17; degenerate" evidence="4">
    <location>
        <begin position="488"/>
        <end position="507"/>
    </location>
</feature>
<feature type="repeat" description="LRR 18" evidence="1">
    <location>
        <begin position="508"/>
        <end position="529"/>
    </location>
</feature>
<feature type="repeat" description="LRR 19" evidence="1">
    <location>
        <begin position="530"/>
        <end position="553"/>
    </location>
</feature>
<feature type="repeat" description="LRR 20" evidence="1">
    <location>
        <begin position="554"/>
        <end position="577"/>
    </location>
</feature>
<feature type="repeat" description="LRR 21" evidence="1">
    <location>
        <begin position="579"/>
        <end position="601"/>
    </location>
</feature>
<feature type="repeat" description="LRR 22" evidence="1">
    <location>
        <begin position="602"/>
        <end position="625"/>
    </location>
</feature>
<feature type="repeat" description="LRR 23" evidence="1">
    <location>
        <begin position="628"/>
        <end position="652"/>
    </location>
</feature>
<feature type="repeat" description="LRR 24" evidence="1">
    <location>
        <begin position="702"/>
        <end position="725"/>
    </location>
</feature>
<feature type="repeat" description="LRR 25" evidence="1">
    <location>
        <begin position="726"/>
        <end position="749"/>
    </location>
</feature>
<feature type="repeat" description="LRR 26" evidence="1">
    <location>
        <begin position="750"/>
        <end position="773"/>
    </location>
</feature>
<feature type="repeat" description="LRR 27" evidence="1">
    <location>
        <begin position="775"/>
        <end position="798"/>
    </location>
</feature>
<feature type="glycosylation site" description="N-linked (GlcNAc...) asparagine" evidence="2">
    <location>
        <position position="59"/>
    </location>
</feature>
<feature type="glycosylation site" description="N-linked (GlcNAc...) asparagine" evidence="2">
    <location>
        <position position="71"/>
    </location>
</feature>
<feature type="glycosylation site" description="N-linked (GlcNAc...) asparagine" evidence="2">
    <location>
        <position position="92"/>
    </location>
</feature>
<feature type="glycosylation site" description="N-linked (GlcNAc...) asparagine" evidence="2">
    <location>
        <position position="146"/>
    </location>
</feature>
<feature type="glycosylation site" description="N-linked (GlcNAc...) asparagine" evidence="2">
    <location>
        <position position="190"/>
    </location>
</feature>
<feature type="glycosylation site" description="N-linked (GlcNAc...) asparagine" evidence="2">
    <location>
        <position position="208"/>
    </location>
</feature>
<feature type="glycosylation site" description="N-linked (GlcNAc...) asparagine" evidence="2">
    <location>
        <position position="244"/>
    </location>
</feature>
<feature type="glycosylation site" description="N-linked (GlcNAc...) asparagine" evidence="2">
    <location>
        <position position="267"/>
    </location>
</feature>
<feature type="glycosylation site" description="N-linked (GlcNAc...) asparagine" evidence="2">
    <location>
        <position position="304"/>
    </location>
</feature>
<feature type="glycosylation site" description="N-linked (GlcNAc...) asparagine" evidence="2">
    <location>
        <position position="313"/>
    </location>
</feature>
<feature type="glycosylation site" description="N-linked (GlcNAc...) asparagine" evidence="2">
    <location>
        <position position="353"/>
    </location>
</feature>
<feature type="glycosylation site" description="N-linked (GlcNAc...) asparagine" evidence="2">
    <location>
        <position position="403"/>
    </location>
</feature>
<feature type="glycosylation site" description="N-linked (GlcNAc...) asparagine" evidence="2">
    <location>
        <position position="463"/>
    </location>
</feature>
<feature type="glycosylation site" description="N-linked (GlcNAc...) asparagine" evidence="2">
    <location>
        <position position="520"/>
    </location>
</feature>
<feature type="glycosylation site" description="N-linked (GlcNAc...) asparagine" evidence="2">
    <location>
        <position position="576"/>
    </location>
</feature>
<feature type="glycosylation site" description="N-linked (GlcNAc...) asparagine" evidence="2">
    <location>
        <position position="732"/>
    </location>
</feature>
<feature type="glycosylation site" description="N-linked (GlcNAc...) asparagine" evidence="2">
    <location>
        <position position="780"/>
    </location>
</feature>
<name>RLP39_ARATH</name>
<keyword id="KW-1003">Cell membrane</keyword>
<keyword id="KW-0325">Glycoprotein</keyword>
<keyword id="KW-0433">Leucine-rich repeat</keyword>
<keyword id="KW-0472">Membrane</keyword>
<keyword id="KW-0675">Receptor</keyword>
<keyword id="KW-1185">Reference proteome</keyword>
<keyword id="KW-0677">Repeat</keyword>
<keyword id="KW-0732">Signal</keyword>
<keyword id="KW-0812">Transmembrane</keyword>
<keyword id="KW-1133">Transmembrane helix</keyword>
<organism>
    <name type="scientific">Arabidopsis thaliana</name>
    <name type="common">Mouse-ear cress</name>
    <dbReference type="NCBI Taxonomy" id="3702"/>
    <lineage>
        <taxon>Eukaryota</taxon>
        <taxon>Viridiplantae</taxon>
        <taxon>Streptophyta</taxon>
        <taxon>Embryophyta</taxon>
        <taxon>Tracheophyta</taxon>
        <taxon>Spermatophyta</taxon>
        <taxon>Magnoliopsida</taxon>
        <taxon>eudicotyledons</taxon>
        <taxon>Gunneridae</taxon>
        <taxon>Pentapetalae</taxon>
        <taxon>rosids</taxon>
        <taxon>malvids</taxon>
        <taxon>Brassicales</taxon>
        <taxon>Brassicaceae</taxon>
        <taxon>Camelineae</taxon>
        <taxon>Arabidopsis</taxon>
    </lineage>
</organism>
<evidence type="ECO:0000255" key="1"/>
<evidence type="ECO:0000255" key="2">
    <source>
        <dbReference type="PROSITE-ProRule" id="PRU00498"/>
    </source>
</evidence>
<evidence type="ECO:0000303" key="3">
    <source>
    </source>
</evidence>
<evidence type="ECO:0000305" key="4"/>
<evidence type="ECO:0000312" key="5">
    <source>
        <dbReference type="Araport" id="AT3G24900"/>
    </source>
</evidence>
<evidence type="ECO:0000312" key="6">
    <source>
        <dbReference type="EMBL" id="BAB02900.1"/>
    </source>
</evidence>